<sequence length="491" mass="53482">MNTQQLAKLRSIVPEMRRVRHIHFVGIGGAGMGGIAEVLANEGYQISGSDLAPNPVTQQLTSLGATIFFNHRPENVRDASVVVVSSAISADNPEIVAAHEARIPVIRRAEMLAELMRFRHGIAIAGTHGKTTTTAMVSSIYAEAGLDPTFVNGGLVKAAGVHARLGHSRYLIAEADESDASFLHLQPMVAIVTNIEADHMDTYHGDFENLKQTFINFLHNLPFYGRAVMCVDDPVIRELLPRVGRQTTTYGFSEDADVRVEDYQQIGPQGHFTLLRQGMPDLHVTLNAPGRHNALNAAAAVAVATEEGIDDDAILRALESFQGTGRRFDFLGEFPLEPVNGKAGTAMLVDDYGHHPTEVDATIKAARAGWPDKNLVMLFQPHRYTRTRDLYDDFANVLTQVDALLMLDVYPAGEAPIPGADSRSLCRTIRNRGKIDPILVSDPAQVATMLAPVLTGNDLILVQGAGNVGKIARYLSEIKLKPQIQEEEQHG</sequence>
<feature type="chain" id="PRO_1000091129" description="UDP-N-acetylmuramate--L-alanine ligase">
    <location>
        <begin position="1"/>
        <end position="491"/>
    </location>
</feature>
<feature type="binding site" evidence="1">
    <location>
        <begin position="126"/>
        <end position="132"/>
    </location>
    <ligand>
        <name>ATP</name>
        <dbReference type="ChEBI" id="CHEBI:30616"/>
    </ligand>
</feature>
<proteinExistence type="inferred from homology"/>
<dbReference type="EC" id="6.3.2.8" evidence="1"/>
<dbReference type="EMBL" id="CP001144">
    <property type="protein sequence ID" value="ACH74253.1"/>
    <property type="molecule type" value="Genomic_DNA"/>
</dbReference>
<dbReference type="RefSeq" id="WP_001096072.1">
    <property type="nucleotide sequence ID" value="NC_011205.1"/>
</dbReference>
<dbReference type="SMR" id="B5FI73"/>
<dbReference type="KEGG" id="sed:SeD_A0138"/>
<dbReference type="HOGENOM" id="CLU_028104_2_2_6"/>
<dbReference type="UniPathway" id="UPA00219"/>
<dbReference type="Proteomes" id="UP000008322">
    <property type="component" value="Chromosome"/>
</dbReference>
<dbReference type="GO" id="GO:0005737">
    <property type="term" value="C:cytoplasm"/>
    <property type="evidence" value="ECO:0007669"/>
    <property type="project" value="UniProtKB-SubCell"/>
</dbReference>
<dbReference type="GO" id="GO:0005524">
    <property type="term" value="F:ATP binding"/>
    <property type="evidence" value="ECO:0007669"/>
    <property type="project" value="UniProtKB-UniRule"/>
</dbReference>
<dbReference type="GO" id="GO:0008763">
    <property type="term" value="F:UDP-N-acetylmuramate-L-alanine ligase activity"/>
    <property type="evidence" value="ECO:0007669"/>
    <property type="project" value="UniProtKB-UniRule"/>
</dbReference>
<dbReference type="GO" id="GO:0051301">
    <property type="term" value="P:cell division"/>
    <property type="evidence" value="ECO:0007669"/>
    <property type="project" value="UniProtKB-KW"/>
</dbReference>
<dbReference type="GO" id="GO:0071555">
    <property type="term" value="P:cell wall organization"/>
    <property type="evidence" value="ECO:0007669"/>
    <property type="project" value="UniProtKB-KW"/>
</dbReference>
<dbReference type="GO" id="GO:0009252">
    <property type="term" value="P:peptidoglycan biosynthetic process"/>
    <property type="evidence" value="ECO:0007669"/>
    <property type="project" value="UniProtKB-UniRule"/>
</dbReference>
<dbReference type="GO" id="GO:0008360">
    <property type="term" value="P:regulation of cell shape"/>
    <property type="evidence" value="ECO:0007669"/>
    <property type="project" value="UniProtKB-KW"/>
</dbReference>
<dbReference type="FunFam" id="3.40.1190.10:FF:000001">
    <property type="entry name" value="UDP-N-acetylmuramate--L-alanine ligase"/>
    <property type="match status" value="1"/>
</dbReference>
<dbReference type="FunFam" id="3.40.50.720:FF:000046">
    <property type="entry name" value="UDP-N-acetylmuramate--L-alanine ligase"/>
    <property type="match status" value="1"/>
</dbReference>
<dbReference type="FunFam" id="3.90.190.20:FF:000001">
    <property type="entry name" value="UDP-N-acetylmuramate--L-alanine ligase"/>
    <property type="match status" value="1"/>
</dbReference>
<dbReference type="Gene3D" id="3.90.190.20">
    <property type="entry name" value="Mur ligase, C-terminal domain"/>
    <property type="match status" value="1"/>
</dbReference>
<dbReference type="Gene3D" id="3.40.1190.10">
    <property type="entry name" value="Mur-like, catalytic domain"/>
    <property type="match status" value="1"/>
</dbReference>
<dbReference type="Gene3D" id="3.40.50.720">
    <property type="entry name" value="NAD(P)-binding Rossmann-like Domain"/>
    <property type="match status" value="1"/>
</dbReference>
<dbReference type="HAMAP" id="MF_00046">
    <property type="entry name" value="MurC"/>
    <property type="match status" value="1"/>
</dbReference>
<dbReference type="InterPro" id="IPR036565">
    <property type="entry name" value="Mur-like_cat_sf"/>
</dbReference>
<dbReference type="InterPro" id="IPR004101">
    <property type="entry name" value="Mur_ligase_C"/>
</dbReference>
<dbReference type="InterPro" id="IPR036615">
    <property type="entry name" value="Mur_ligase_C_dom_sf"/>
</dbReference>
<dbReference type="InterPro" id="IPR013221">
    <property type="entry name" value="Mur_ligase_cen"/>
</dbReference>
<dbReference type="InterPro" id="IPR000713">
    <property type="entry name" value="Mur_ligase_N"/>
</dbReference>
<dbReference type="InterPro" id="IPR050061">
    <property type="entry name" value="MurCDEF_pg_biosynth"/>
</dbReference>
<dbReference type="InterPro" id="IPR005758">
    <property type="entry name" value="UDP-N-AcMur_Ala_ligase_MurC"/>
</dbReference>
<dbReference type="NCBIfam" id="TIGR01082">
    <property type="entry name" value="murC"/>
    <property type="match status" value="1"/>
</dbReference>
<dbReference type="PANTHER" id="PTHR43445:SF3">
    <property type="entry name" value="UDP-N-ACETYLMURAMATE--L-ALANINE LIGASE"/>
    <property type="match status" value="1"/>
</dbReference>
<dbReference type="PANTHER" id="PTHR43445">
    <property type="entry name" value="UDP-N-ACETYLMURAMATE--L-ALANINE LIGASE-RELATED"/>
    <property type="match status" value="1"/>
</dbReference>
<dbReference type="Pfam" id="PF01225">
    <property type="entry name" value="Mur_ligase"/>
    <property type="match status" value="1"/>
</dbReference>
<dbReference type="Pfam" id="PF02875">
    <property type="entry name" value="Mur_ligase_C"/>
    <property type="match status" value="1"/>
</dbReference>
<dbReference type="Pfam" id="PF08245">
    <property type="entry name" value="Mur_ligase_M"/>
    <property type="match status" value="1"/>
</dbReference>
<dbReference type="SUPFAM" id="SSF51984">
    <property type="entry name" value="MurCD N-terminal domain"/>
    <property type="match status" value="1"/>
</dbReference>
<dbReference type="SUPFAM" id="SSF53623">
    <property type="entry name" value="MurD-like peptide ligases, catalytic domain"/>
    <property type="match status" value="1"/>
</dbReference>
<dbReference type="SUPFAM" id="SSF53244">
    <property type="entry name" value="MurD-like peptide ligases, peptide-binding domain"/>
    <property type="match status" value="1"/>
</dbReference>
<gene>
    <name evidence="1" type="primary">murC</name>
    <name type="ordered locus">SeD_A0138</name>
</gene>
<name>MURC_SALDC</name>
<comment type="function">
    <text evidence="1">Cell wall formation.</text>
</comment>
<comment type="catalytic activity">
    <reaction evidence="1">
        <text>UDP-N-acetyl-alpha-D-muramate + L-alanine + ATP = UDP-N-acetyl-alpha-D-muramoyl-L-alanine + ADP + phosphate + H(+)</text>
        <dbReference type="Rhea" id="RHEA:23372"/>
        <dbReference type="ChEBI" id="CHEBI:15378"/>
        <dbReference type="ChEBI" id="CHEBI:30616"/>
        <dbReference type="ChEBI" id="CHEBI:43474"/>
        <dbReference type="ChEBI" id="CHEBI:57972"/>
        <dbReference type="ChEBI" id="CHEBI:70757"/>
        <dbReference type="ChEBI" id="CHEBI:83898"/>
        <dbReference type="ChEBI" id="CHEBI:456216"/>
        <dbReference type="EC" id="6.3.2.8"/>
    </reaction>
</comment>
<comment type="pathway">
    <text evidence="1">Cell wall biogenesis; peptidoglycan biosynthesis.</text>
</comment>
<comment type="subcellular location">
    <subcellularLocation>
        <location evidence="1">Cytoplasm</location>
    </subcellularLocation>
</comment>
<comment type="similarity">
    <text evidence="1">Belongs to the MurCDEF family.</text>
</comment>
<keyword id="KW-0067">ATP-binding</keyword>
<keyword id="KW-0131">Cell cycle</keyword>
<keyword id="KW-0132">Cell division</keyword>
<keyword id="KW-0133">Cell shape</keyword>
<keyword id="KW-0961">Cell wall biogenesis/degradation</keyword>
<keyword id="KW-0963">Cytoplasm</keyword>
<keyword id="KW-0436">Ligase</keyword>
<keyword id="KW-0547">Nucleotide-binding</keyword>
<keyword id="KW-0573">Peptidoglycan synthesis</keyword>
<organism>
    <name type="scientific">Salmonella dublin (strain CT_02021853)</name>
    <dbReference type="NCBI Taxonomy" id="439851"/>
    <lineage>
        <taxon>Bacteria</taxon>
        <taxon>Pseudomonadati</taxon>
        <taxon>Pseudomonadota</taxon>
        <taxon>Gammaproteobacteria</taxon>
        <taxon>Enterobacterales</taxon>
        <taxon>Enterobacteriaceae</taxon>
        <taxon>Salmonella</taxon>
    </lineage>
</organism>
<protein>
    <recommendedName>
        <fullName evidence="1">UDP-N-acetylmuramate--L-alanine ligase</fullName>
        <ecNumber evidence="1">6.3.2.8</ecNumber>
    </recommendedName>
    <alternativeName>
        <fullName evidence="1">UDP-N-acetylmuramoyl-L-alanine synthetase</fullName>
    </alternativeName>
</protein>
<reference key="1">
    <citation type="journal article" date="2011" name="J. Bacteriol.">
        <title>Comparative genomics of 28 Salmonella enterica isolates: evidence for CRISPR-mediated adaptive sublineage evolution.</title>
        <authorList>
            <person name="Fricke W.F."/>
            <person name="Mammel M.K."/>
            <person name="McDermott P.F."/>
            <person name="Tartera C."/>
            <person name="White D.G."/>
            <person name="Leclerc J.E."/>
            <person name="Ravel J."/>
            <person name="Cebula T.A."/>
        </authorList>
    </citation>
    <scope>NUCLEOTIDE SEQUENCE [LARGE SCALE GENOMIC DNA]</scope>
    <source>
        <strain>CT_02021853</strain>
    </source>
</reference>
<accession>B5FI73</accession>
<evidence type="ECO:0000255" key="1">
    <source>
        <dbReference type="HAMAP-Rule" id="MF_00046"/>
    </source>
</evidence>